<organism>
    <name type="scientific">Vibrio cholerae serotype O1 (strain ATCC 39541 / Classical Ogawa 395 / O395)</name>
    <dbReference type="NCBI Taxonomy" id="345073"/>
    <lineage>
        <taxon>Bacteria</taxon>
        <taxon>Pseudomonadati</taxon>
        <taxon>Pseudomonadota</taxon>
        <taxon>Gammaproteobacteria</taxon>
        <taxon>Vibrionales</taxon>
        <taxon>Vibrionaceae</taxon>
        <taxon>Vibrio</taxon>
    </lineage>
</organism>
<proteinExistence type="inferred from homology"/>
<name>FPG_VIBC3</name>
<sequence>MPELPEVEVSRLGISPHLVGGTIQSLVLRTPKLRWPIPQELKQLEGQTILAIHRRAKYLIIETAVGSAIVHLGMSGSLRILDGDFPAAKHDHVDLVMTSGKRLRYNDPRRFGAWLWCAPDESHEVLGRLGPEPLTEAFNAEYMMDKARNKRIAVKAFIMDNAAVVGVGNIYANESLFTSRLHPLRPAHSLSLEEWQTLVANIKQVLQVAIKQGGTTLKDFTQSDGKPGYFAQELQVYGKAKQPCPHCGEPLCEQKIAQRNTFFCPQCQH</sequence>
<protein>
    <recommendedName>
        <fullName evidence="2">Formamidopyrimidine-DNA glycosylase</fullName>
        <shortName evidence="2">Fapy-DNA glycosylase</shortName>
        <ecNumber evidence="2">3.2.2.23</ecNumber>
    </recommendedName>
    <alternativeName>
        <fullName evidence="2">DNA-(apurinic or apyrimidinic site) lyase MutM</fullName>
        <shortName evidence="2">AP lyase MutM</shortName>
        <ecNumber evidence="2">4.2.99.18</ecNumber>
    </alternativeName>
</protein>
<accession>A5F407</accession>
<accession>C3M399</accession>
<feature type="initiator methionine" description="Removed" evidence="1">
    <location>
        <position position="1"/>
    </location>
</feature>
<feature type="chain" id="PRO_1000071311" description="Formamidopyrimidine-DNA glycosylase">
    <location>
        <begin position="2"/>
        <end position="269"/>
    </location>
</feature>
<feature type="zinc finger region" description="FPG-type" evidence="2">
    <location>
        <begin position="235"/>
        <end position="269"/>
    </location>
</feature>
<feature type="active site" description="Schiff-base intermediate with DNA" evidence="2">
    <location>
        <position position="2"/>
    </location>
</feature>
<feature type="active site" description="Proton donor" evidence="2">
    <location>
        <position position="3"/>
    </location>
</feature>
<feature type="active site" description="Proton donor; for beta-elimination activity" evidence="2">
    <location>
        <position position="57"/>
    </location>
</feature>
<feature type="active site" description="Proton donor; for delta-elimination activity" evidence="2">
    <location>
        <position position="259"/>
    </location>
</feature>
<feature type="binding site" evidence="2">
    <location>
        <position position="90"/>
    </location>
    <ligand>
        <name>DNA</name>
        <dbReference type="ChEBI" id="CHEBI:16991"/>
    </ligand>
</feature>
<feature type="binding site" evidence="2">
    <location>
        <position position="109"/>
    </location>
    <ligand>
        <name>DNA</name>
        <dbReference type="ChEBI" id="CHEBI:16991"/>
    </ligand>
</feature>
<feature type="binding site" evidence="2">
    <location>
        <position position="150"/>
    </location>
    <ligand>
        <name>DNA</name>
        <dbReference type="ChEBI" id="CHEBI:16991"/>
    </ligand>
</feature>
<keyword id="KW-0227">DNA damage</keyword>
<keyword id="KW-0234">DNA repair</keyword>
<keyword id="KW-0238">DNA-binding</keyword>
<keyword id="KW-0326">Glycosidase</keyword>
<keyword id="KW-0378">Hydrolase</keyword>
<keyword id="KW-0456">Lyase</keyword>
<keyword id="KW-0479">Metal-binding</keyword>
<keyword id="KW-0511">Multifunctional enzyme</keyword>
<keyword id="KW-0862">Zinc</keyword>
<keyword id="KW-0863">Zinc-finger</keyword>
<evidence type="ECO:0000250" key="1"/>
<evidence type="ECO:0000255" key="2">
    <source>
        <dbReference type="HAMAP-Rule" id="MF_00103"/>
    </source>
</evidence>
<comment type="function">
    <text evidence="2">Involved in base excision repair of DNA damaged by oxidation or by mutagenic agents. Acts as a DNA glycosylase that recognizes and removes damaged bases. Has a preference for oxidized purines, such as 7,8-dihydro-8-oxoguanine (8-oxoG). Has AP (apurinic/apyrimidinic) lyase activity and introduces nicks in the DNA strand. Cleaves the DNA backbone by beta-delta elimination to generate a single-strand break at the site of the removed base with both 3'- and 5'-phosphates.</text>
</comment>
<comment type="catalytic activity">
    <reaction evidence="2">
        <text>Hydrolysis of DNA containing ring-opened 7-methylguanine residues, releasing 2,6-diamino-4-hydroxy-5-(N-methyl)formamidopyrimidine.</text>
        <dbReference type="EC" id="3.2.2.23"/>
    </reaction>
</comment>
<comment type="catalytic activity">
    <reaction evidence="2">
        <text>2'-deoxyribonucleotide-(2'-deoxyribose 5'-phosphate)-2'-deoxyribonucleotide-DNA = a 3'-end 2'-deoxyribonucleotide-(2,3-dehydro-2,3-deoxyribose 5'-phosphate)-DNA + a 5'-end 5'-phospho-2'-deoxyribonucleoside-DNA + H(+)</text>
        <dbReference type="Rhea" id="RHEA:66592"/>
        <dbReference type="Rhea" id="RHEA-COMP:13180"/>
        <dbReference type="Rhea" id="RHEA-COMP:16897"/>
        <dbReference type="Rhea" id="RHEA-COMP:17067"/>
        <dbReference type="ChEBI" id="CHEBI:15378"/>
        <dbReference type="ChEBI" id="CHEBI:136412"/>
        <dbReference type="ChEBI" id="CHEBI:157695"/>
        <dbReference type="ChEBI" id="CHEBI:167181"/>
        <dbReference type="EC" id="4.2.99.18"/>
    </reaction>
</comment>
<comment type="cofactor">
    <cofactor evidence="2">
        <name>Zn(2+)</name>
        <dbReference type="ChEBI" id="CHEBI:29105"/>
    </cofactor>
    <text evidence="2">Binds 1 zinc ion per subunit.</text>
</comment>
<comment type="subunit">
    <text evidence="2">Monomer.</text>
</comment>
<comment type="similarity">
    <text evidence="2">Belongs to the FPG family.</text>
</comment>
<reference key="1">
    <citation type="submission" date="2007-03" db="EMBL/GenBank/DDBJ databases">
        <authorList>
            <person name="Heidelberg J."/>
        </authorList>
    </citation>
    <scope>NUCLEOTIDE SEQUENCE [LARGE SCALE GENOMIC DNA]</scope>
    <source>
        <strain>ATCC 39541 / Classical Ogawa 395 / O395</strain>
    </source>
</reference>
<reference key="2">
    <citation type="journal article" date="2008" name="PLoS ONE">
        <title>A recalibrated molecular clock and independent origins for the cholera pandemic clones.</title>
        <authorList>
            <person name="Feng L."/>
            <person name="Reeves P.R."/>
            <person name="Lan R."/>
            <person name="Ren Y."/>
            <person name="Gao C."/>
            <person name="Zhou Z."/>
            <person name="Ren Y."/>
            <person name="Cheng J."/>
            <person name="Wang W."/>
            <person name="Wang J."/>
            <person name="Qian W."/>
            <person name="Li D."/>
            <person name="Wang L."/>
        </authorList>
    </citation>
    <scope>NUCLEOTIDE SEQUENCE [LARGE SCALE GENOMIC DNA]</scope>
    <source>
        <strain>ATCC 39541 / Classical Ogawa 395 / O395</strain>
    </source>
</reference>
<gene>
    <name evidence="2" type="primary">mutM</name>
    <name evidence="2" type="synonym">fpg</name>
    <name type="ordered locus">VC0395_A2602</name>
    <name type="ordered locus">VC395_0253</name>
</gene>
<dbReference type="EC" id="3.2.2.23" evidence="2"/>
<dbReference type="EC" id="4.2.99.18" evidence="2"/>
<dbReference type="EMBL" id="CP000627">
    <property type="protein sequence ID" value="ABQ20512.1"/>
    <property type="molecule type" value="Genomic_DNA"/>
</dbReference>
<dbReference type="EMBL" id="CP001235">
    <property type="protein sequence ID" value="ACP08278.1"/>
    <property type="molecule type" value="Genomic_DNA"/>
</dbReference>
<dbReference type="RefSeq" id="WP_001114647.1">
    <property type="nucleotide sequence ID" value="NZ_JAACZH010000028.1"/>
</dbReference>
<dbReference type="SMR" id="A5F407"/>
<dbReference type="KEGG" id="vco:VC0395_A2602"/>
<dbReference type="KEGG" id="vcr:VC395_0253"/>
<dbReference type="PATRIC" id="fig|345073.21.peg.242"/>
<dbReference type="eggNOG" id="COG0266">
    <property type="taxonomic scope" value="Bacteria"/>
</dbReference>
<dbReference type="HOGENOM" id="CLU_038423_1_1_6"/>
<dbReference type="OrthoDB" id="9800855at2"/>
<dbReference type="Proteomes" id="UP000000249">
    <property type="component" value="Chromosome 2"/>
</dbReference>
<dbReference type="GO" id="GO:0034039">
    <property type="term" value="F:8-oxo-7,8-dihydroguanine DNA N-glycosylase activity"/>
    <property type="evidence" value="ECO:0007669"/>
    <property type="project" value="TreeGrafter"/>
</dbReference>
<dbReference type="GO" id="GO:0140078">
    <property type="term" value="F:class I DNA-(apurinic or apyrimidinic site) endonuclease activity"/>
    <property type="evidence" value="ECO:0007669"/>
    <property type="project" value="UniProtKB-EC"/>
</dbReference>
<dbReference type="GO" id="GO:0003684">
    <property type="term" value="F:damaged DNA binding"/>
    <property type="evidence" value="ECO:0007669"/>
    <property type="project" value="InterPro"/>
</dbReference>
<dbReference type="GO" id="GO:0008270">
    <property type="term" value="F:zinc ion binding"/>
    <property type="evidence" value="ECO:0007669"/>
    <property type="project" value="UniProtKB-UniRule"/>
</dbReference>
<dbReference type="GO" id="GO:0006284">
    <property type="term" value="P:base-excision repair"/>
    <property type="evidence" value="ECO:0007669"/>
    <property type="project" value="InterPro"/>
</dbReference>
<dbReference type="CDD" id="cd08966">
    <property type="entry name" value="EcFpg-like_N"/>
    <property type="match status" value="1"/>
</dbReference>
<dbReference type="FunFam" id="1.10.8.50:FF:000003">
    <property type="entry name" value="Formamidopyrimidine-DNA glycosylase"/>
    <property type="match status" value="1"/>
</dbReference>
<dbReference type="FunFam" id="3.20.190.10:FF:000001">
    <property type="entry name" value="Formamidopyrimidine-DNA glycosylase"/>
    <property type="match status" value="1"/>
</dbReference>
<dbReference type="Gene3D" id="1.10.8.50">
    <property type="match status" value="1"/>
</dbReference>
<dbReference type="Gene3D" id="3.20.190.10">
    <property type="entry name" value="MutM-like, N-terminal"/>
    <property type="match status" value="1"/>
</dbReference>
<dbReference type="HAMAP" id="MF_00103">
    <property type="entry name" value="Fapy_DNA_glycosyl"/>
    <property type="match status" value="1"/>
</dbReference>
<dbReference type="InterPro" id="IPR015886">
    <property type="entry name" value="DNA_glyclase/AP_lyase_DNA-bd"/>
</dbReference>
<dbReference type="InterPro" id="IPR015887">
    <property type="entry name" value="DNA_glyclase_Znf_dom_DNA_BS"/>
</dbReference>
<dbReference type="InterPro" id="IPR020629">
    <property type="entry name" value="Formamido-pyr_DNA_Glyclase"/>
</dbReference>
<dbReference type="InterPro" id="IPR012319">
    <property type="entry name" value="FPG_cat"/>
</dbReference>
<dbReference type="InterPro" id="IPR035937">
    <property type="entry name" value="MutM-like_N-ter"/>
</dbReference>
<dbReference type="InterPro" id="IPR010979">
    <property type="entry name" value="Ribosomal_uS13-like_H2TH"/>
</dbReference>
<dbReference type="InterPro" id="IPR000214">
    <property type="entry name" value="Znf_DNA_glyclase/AP_lyase"/>
</dbReference>
<dbReference type="InterPro" id="IPR010663">
    <property type="entry name" value="Znf_FPG/IleRS"/>
</dbReference>
<dbReference type="NCBIfam" id="TIGR00577">
    <property type="entry name" value="fpg"/>
    <property type="match status" value="1"/>
</dbReference>
<dbReference type="NCBIfam" id="NF002211">
    <property type="entry name" value="PRK01103.1"/>
    <property type="match status" value="1"/>
</dbReference>
<dbReference type="PANTHER" id="PTHR22993">
    <property type="entry name" value="FORMAMIDOPYRIMIDINE-DNA GLYCOSYLASE"/>
    <property type="match status" value="1"/>
</dbReference>
<dbReference type="PANTHER" id="PTHR22993:SF9">
    <property type="entry name" value="FORMAMIDOPYRIMIDINE-DNA GLYCOSYLASE"/>
    <property type="match status" value="1"/>
</dbReference>
<dbReference type="Pfam" id="PF01149">
    <property type="entry name" value="Fapy_DNA_glyco"/>
    <property type="match status" value="1"/>
</dbReference>
<dbReference type="Pfam" id="PF06831">
    <property type="entry name" value="H2TH"/>
    <property type="match status" value="1"/>
</dbReference>
<dbReference type="Pfam" id="PF06827">
    <property type="entry name" value="zf-FPG_IleRS"/>
    <property type="match status" value="1"/>
</dbReference>
<dbReference type="SMART" id="SM00898">
    <property type="entry name" value="Fapy_DNA_glyco"/>
    <property type="match status" value="1"/>
</dbReference>
<dbReference type="SMART" id="SM01232">
    <property type="entry name" value="H2TH"/>
    <property type="match status" value="1"/>
</dbReference>
<dbReference type="SUPFAM" id="SSF57716">
    <property type="entry name" value="Glucocorticoid receptor-like (DNA-binding domain)"/>
    <property type="match status" value="1"/>
</dbReference>
<dbReference type="SUPFAM" id="SSF81624">
    <property type="entry name" value="N-terminal domain of MutM-like DNA repair proteins"/>
    <property type="match status" value="1"/>
</dbReference>
<dbReference type="SUPFAM" id="SSF46946">
    <property type="entry name" value="S13-like H2TH domain"/>
    <property type="match status" value="1"/>
</dbReference>
<dbReference type="PROSITE" id="PS51068">
    <property type="entry name" value="FPG_CAT"/>
    <property type="match status" value="1"/>
</dbReference>
<dbReference type="PROSITE" id="PS01242">
    <property type="entry name" value="ZF_FPG_1"/>
    <property type="match status" value="1"/>
</dbReference>
<dbReference type="PROSITE" id="PS51066">
    <property type="entry name" value="ZF_FPG_2"/>
    <property type="match status" value="1"/>
</dbReference>